<feature type="chain" id="PRO_0000284092" description="Envelope small membrane protein">
    <location>
        <begin position="1"/>
        <end position="83"/>
    </location>
</feature>
<feature type="topological domain" description="Virion surface" evidence="1">
    <location>
        <begin position="1"/>
        <end position="16"/>
    </location>
</feature>
<feature type="transmembrane region" description="Helical" evidence="1">
    <location>
        <begin position="17"/>
        <end position="37"/>
    </location>
</feature>
<feature type="topological domain" description="Intravirion" evidence="1">
    <location>
        <begin position="38"/>
        <end position="79"/>
    </location>
</feature>
<comment type="function">
    <text evidence="2 3">Component of the viral envelope that plays a central role in virus morphogenesis and assembly. It is sufficient to form virus-like particles. Seems to be important for creating the membrane curvature needed to acquire the rounded, stable and infectious particle phenotype. Acts as a viroporin, inducing the formation of hydrophilic pores in cellular membranes. Also induces apoptosis.</text>
</comment>
<comment type="function">
    <text evidence="1">Plays a central role in virus morphogenesis and assembly. Acts as a viroporin and self-assembles in host membranes forming pentameric protein-lipid pores that allow ion transport. Also plays a role in the induction of apoptosis.</text>
</comment>
<comment type="subunit">
    <text evidence="1">Homopentamer. Interacts with membrane protein M in the budding compartment of the host cell, which is located between endoplasmic reticulum and the Golgi complex. Interacts with Nucleoprotein.</text>
</comment>
<comment type="subcellular location">
    <subcellularLocation>
        <location evidence="1">Host Golgi apparatus membrane</location>
        <topology evidence="1">Single-pass type III membrane protein</topology>
    </subcellularLocation>
    <text evidence="1">The cytoplasmic tail functions as a Golgi complex-targeting signal.</text>
</comment>
<comment type="similarity">
    <text evidence="1">Belongs to the betacoronaviruses E protein family.</text>
</comment>
<organismHost>
    <name type="scientific">Mus musculus</name>
    <name type="common">Mouse</name>
    <dbReference type="NCBI Taxonomy" id="10090"/>
</organismHost>
<dbReference type="EMBL" id="AF029248">
    <property type="status" value="NOT_ANNOTATED_CDS"/>
    <property type="molecule type" value="Genomic_RNA"/>
</dbReference>
<dbReference type="TCDB" id="1.A.65.1.1">
    <property type="family name" value="the coronavirus viroporin e protein (viroporin e) family"/>
</dbReference>
<dbReference type="Proteomes" id="UP000007192">
    <property type="component" value="Segment"/>
</dbReference>
<dbReference type="GO" id="GO:0044178">
    <property type="term" value="C:host cell Golgi membrane"/>
    <property type="evidence" value="ECO:0007669"/>
    <property type="project" value="UniProtKB-SubCell"/>
</dbReference>
<dbReference type="GO" id="GO:0016020">
    <property type="term" value="C:membrane"/>
    <property type="evidence" value="ECO:0007669"/>
    <property type="project" value="UniProtKB-UniRule"/>
</dbReference>
<dbReference type="GO" id="GO:0051673">
    <property type="term" value="P:disruption of plasma membrane integrity in another organism"/>
    <property type="evidence" value="ECO:0000314"/>
    <property type="project" value="CACAO"/>
</dbReference>
<dbReference type="GO" id="GO:0046760">
    <property type="term" value="P:viral budding from Golgi membrane"/>
    <property type="evidence" value="ECO:0000314"/>
    <property type="project" value="UniProtKB"/>
</dbReference>
<dbReference type="CDD" id="cd21532">
    <property type="entry name" value="HKU1-CoV-like_E"/>
    <property type="match status" value="1"/>
</dbReference>
<dbReference type="HAMAP" id="MF_04204">
    <property type="entry name" value="BETA_CORONA_E"/>
    <property type="match status" value="1"/>
</dbReference>
<dbReference type="InterPro" id="IPR043506">
    <property type="entry name" value="E_protein_bCoV"/>
</dbReference>
<dbReference type="InterPro" id="IPR003873">
    <property type="entry name" value="E_protein_CoV"/>
</dbReference>
<dbReference type="Pfam" id="PF02723">
    <property type="entry name" value="CoV_E"/>
    <property type="match status" value="1"/>
</dbReference>
<dbReference type="PROSITE" id="PS51926">
    <property type="entry name" value="COV_E"/>
    <property type="match status" value="1"/>
</dbReference>
<proteinExistence type="evidence at protein level"/>
<organism>
    <name type="scientific">Murine coronavirus (strain A59)</name>
    <name type="common">MHV-A59</name>
    <name type="synonym">Murine hepatitis virus</name>
    <dbReference type="NCBI Taxonomy" id="11142"/>
    <lineage>
        <taxon>Viruses</taxon>
        <taxon>Riboviria</taxon>
        <taxon>Orthornavirae</taxon>
        <taxon>Pisuviricota</taxon>
        <taxon>Pisoniviricetes</taxon>
        <taxon>Nidovirales</taxon>
        <taxon>Cornidovirineae</taxon>
        <taxon>Coronaviridae</taxon>
        <taxon>Orthocoronavirinae</taxon>
        <taxon>Betacoronavirus</taxon>
        <taxon>Embecovirus</taxon>
        <taxon>Murine coronavirus</taxon>
    </lineage>
</organism>
<sequence length="83" mass="9667">MFNLFLTDTVWYVGQIIFIFAVCLMVTIIVVAFLASIKLCIQLCGLCNTLVLSPSIYLYDRSKQLYKYYNEEMRLPLLEVDDI</sequence>
<reference key="1">
    <citation type="journal article" date="1997" name="Virology">
        <title>Altered pathogenesis of a mutant of the murine coronavirus MHV-A59 is associated with a Q159L amino acid substitution in the spike protein.</title>
        <authorList>
            <person name="Leparc-Goffart I."/>
            <person name="Hingley S.T."/>
            <person name="Chua M.M."/>
            <person name="Jiang X."/>
            <person name="Lavi E."/>
            <person name="Weiss S.R."/>
        </authorList>
    </citation>
    <scope>NUCLEOTIDE SEQUENCE [GENOMIC RNA]</scope>
    <source>
        <strain>Isolate C12 mutant</strain>
    </source>
</reference>
<reference key="2">
    <citation type="journal article" date="1999" name="Virology">
        <title>Release of coronavirus E protein in membrane vesicles from virus-infected cells and E protein-expressing cells.</title>
        <authorList>
            <person name="Maeda J."/>
            <person name="Maeda A."/>
            <person name="Makino S."/>
        </authorList>
    </citation>
    <scope>INTERACTION WITH E PROTEIN</scope>
</reference>
<reference key="3">
    <citation type="journal article" date="1999" name="J. Virol.">
        <title>Induction of apoptosis in murine coronavirus-infected cultured cells and demonstration of E protein as an apoptosis inducer.</title>
        <authorList>
            <person name="An S."/>
            <person name="Chen C.-J."/>
            <person name="Yu X."/>
            <person name="Leibowitz J.L."/>
            <person name="Makino S."/>
        </authorList>
    </citation>
    <scope>FUNCTION</scope>
</reference>
<reference key="4">
    <citation type="journal article" date="2000" name="J. Virol.">
        <title>Characterization of the coronavirus mouse hepatitis virus strain A59 small membrane protein E.</title>
        <authorList>
            <person name="Raamsman M.J."/>
            <person name="Locker J.K."/>
            <person name="de Hooge A."/>
            <person name="de Vries A.A.F."/>
            <person name="Griffiths G."/>
            <person name="Vennema H."/>
            <person name="Rottier P.J.M."/>
        </authorList>
    </citation>
    <scope>CHARACTERIZATION</scope>
    <scope>TOPOLOGY</scope>
</reference>
<reference key="5">
    <citation type="journal article" date="2001" name="Virology">
        <title>Membrane topology of coronavirus E protein.</title>
        <authorList>
            <person name="Maeda J."/>
            <person name="Repass J.F."/>
            <person name="Maeda A."/>
            <person name="Makino S."/>
        </authorList>
    </citation>
    <scope>TOPOLOGY</scope>
</reference>
<reference key="6">
    <citation type="journal article" date="2005" name="FEBS Lett.">
        <title>Viroporin activity of murine hepatitis virus E protein.</title>
        <authorList>
            <person name="Madan V."/>
            <person name="Garcia Mde J."/>
            <person name="Sanz M.A."/>
            <person name="Carrasco L."/>
        </authorList>
    </citation>
    <scope>FUNCTION</scope>
</reference>
<protein>
    <recommendedName>
        <fullName evidence="1">Envelope small membrane protein</fullName>
        <shortName evidence="1">E protein</shortName>
        <shortName evidence="1">sM protein</shortName>
    </recommendedName>
</protein>
<gene>
    <name evidence="1" type="primary">E</name>
    <name type="synonym">sM</name>
    <name type="ORF">5b</name>
</gene>
<evidence type="ECO:0000255" key="1">
    <source>
        <dbReference type="HAMAP-Rule" id="MF_04204"/>
    </source>
</evidence>
<evidence type="ECO:0000269" key="2">
    <source>
    </source>
</evidence>
<evidence type="ECO:0000269" key="3">
    <source>
    </source>
</evidence>
<accession>P0C2R0</accession>
<keyword id="KW-0053">Apoptosis</keyword>
<keyword id="KW-1040">Host Golgi apparatus</keyword>
<keyword id="KW-1043">Host membrane</keyword>
<keyword id="KW-0472">Membrane</keyword>
<keyword id="KW-1185">Reference proteome</keyword>
<keyword id="KW-0812">Transmembrane</keyword>
<keyword id="KW-1133">Transmembrane helix</keyword>
<name>VEMP_CVMA5</name>